<dbReference type="EMBL" id="AB016878">
    <property type="protein sequence ID" value="BAB01024.1"/>
    <property type="status" value="ALT_SEQ"/>
    <property type="molecule type" value="Genomic_DNA"/>
</dbReference>
<dbReference type="EMBL" id="CP002686">
    <property type="protein sequence ID" value="AEE77651.1"/>
    <property type="molecule type" value="Genomic_DNA"/>
</dbReference>
<dbReference type="RefSeq" id="NP_189679.1">
    <property type="nucleotide sequence ID" value="NM_113959.2"/>
</dbReference>
<dbReference type="STRING" id="3702.F4J6N7"/>
<dbReference type="PaxDb" id="3702-AT3G30580.1"/>
<dbReference type="EnsemblPlants" id="AT3G30580.1">
    <property type="protein sequence ID" value="AT3G30580.1"/>
    <property type="gene ID" value="AT3G30580"/>
</dbReference>
<dbReference type="GeneID" id="822772"/>
<dbReference type="Gramene" id="AT3G30580.1">
    <property type="protein sequence ID" value="AT3G30580.1"/>
    <property type="gene ID" value="AT3G30580"/>
</dbReference>
<dbReference type="KEGG" id="ath:AT3G30580"/>
<dbReference type="Araport" id="AT3G30580"/>
<dbReference type="TAIR" id="AT3G30580"/>
<dbReference type="eggNOG" id="ENOG502S95J">
    <property type="taxonomic scope" value="Eukaryota"/>
</dbReference>
<dbReference type="HOGENOM" id="CLU_111434_1_0_1"/>
<dbReference type="InParanoid" id="F4J6N7"/>
<dbReference type="OMA" id="NHEFKHA"/>
<dbReference type="OrthoDB" id="1738616at2759"/>
<dbReference type="PRO" id="PR:F4J6N7"/>
<dbReference type="Proteomes" id="UP000006548">
    <property type="component" value="Chromosome 3"/>
</dbReference>
<dbReference type="ExpressionAtlas" id="F4J6N7">
    <property type="expression patterns" value="baseline and differential"/>
</dbReference>
<dbReference type="GO" id="GO:0005737">
    <property type="term" value="C:cytoplasm"/>
    <property type="evidence" value="ECO:0000250"/>
    <property type="project" value="UniProtKB"/>
</dbReference>
<dbReference type="GO" id="GO:0005634">
    <property type="term" value="C:nucleus"/>
    <property type="evidence" value="ECO:0000250"/>
    <property type="project" value="UniProtKB"/>
</dbReference>
<dbReference type="GO" id="GO:0009691">
    <property type="term" value="P:cytokinin biosynthetic process"/>
    <property type="evidence" value="ECO:0007669"/>
    <property type="project" value="UniProtKB-KW"/>
</dbReference>
<dbReference type="GO" id="GO:0009690">
    <property type="term" value="P:cytokinin metabolic process"/>
    <property type="evidence" value="ECO:0000250"/>
    <property type="project" value="UniProtKB"/>
</dbReference>
<dbReference type="GO" id="GO:0009736">
    <property type="term" value="P:cytokinin-activated signaling pathway"/>
    <property type="evidence" value="ECO:0000250"/>
    <property type="project" value="UniProtKB"/>
</dbReference>
<dbReference type="InterPro" id="IPR044670">
    <property type="entry name" value="SOFL"/>
</dbReference>
<dbReference type="PANTHER" id="PTHR33347">
    <property type="entry name" value="OSJNBA0091C07.3 PROTEIN"/>
    <property type="match status" value="1"/>
</dbReference>
<dbReference type="PANTHER" id="PTHR33347:SF27">
    <property type="entry name" value="PROTEIN SOB FIVE-LIKE 3-RELATED"/>
    <property type="match status" value="1"/>
</dbReference>
<reference key="1">
    <citation type="journal article" date="2000" name="DNA Res.">
        <title>Structural analysis of Arabidopsis thaliana chromosome 3. I. Sequence features of the regions of 4,504,864 bp covered by sixty P1 and TAC clones.</title>
        <authorList>
            <person name="Sato S."/>
            <person name="Nakamura Y."/>
            <person name="Kaneko T."/>
            <person name="Katoh T."/>
            <person name="Asamizu E."/>
            <person name="Tabata S."/>
        </authorList>
    </citation>
    <scope>NUCLEOTIDE SEQUENCE [LARGE SCALE GENOMIC DNA]</scope>
    <source>
        <strain>cv. Columbia</strain>
    </source>
</reference>
<reference key="2">
    <citation type="journal article" date="2017" name="Plant J.">
        <title>Araport11: a complete reannotation of the Arabidopsis thaliana reference genome.</title>
        <authorList>
            <person name="Cheng C.Y."/>
            <person name="Krishnakumar V."/>
            <person name="Chan A.P."/>
            <person name="Thibaud-Nissen F."/>
            <person name="Schobel S."/>
            <person name="Town C.D."/>
        </authorList>
    </citation>
    <scope>GENOME REANNOTATION</scope>
    <source>
        <strain>cv. Columbia</strain>
    </source>
</reference>
<reference key="3">
    <citation type="journal article" date="2018" name="G3 (Bethesda)">
        <title>Synopsis of the SOFL plant-specific gene family.</title>
        <authorList>
            <person name="Tayengwa R."/>
            <person name="Zhao J."/>
            <person name="Pierce C.F."/>
            <person name="Werner B.E."/>
            <person name="Neff M.M."/>
        </authorList>
    </citation>
    <scope>TISSUE SPECIFICITY</scope>
    <scope>GENE FAMILY</scope>
    <scope>NOMENCLATURE</scope>
    <source>
        <strain>cv. Columbia</strain>
    </source>
</reference>
<proteinExistence type="evidence at transcript level"/>
<gene>
    <name evidence="6" type="primary">SOFL3</name>
    <name evidence="9" type="ordered locus">At3g30580</name>
    <name evidence="10" type="ORF">MQP15.8</name>
</gene>
<organism>
    <name type="scientific">Arabidopsis thaliana</name>
    <name type="common">Mouse-ear cress</name>
    <dbReference type="NCBI Taxonomy" id="3702"/>
    <lineage>
        <taxon>Eukaryota</taxon>
        <taxon>Viridiplantae</taxon>
        <taxon>Streptophyta</taxon>
        <taxon>Embryophyta</taxon>
        <taxon>Tracheophyta</taxon>
        <taxon>Spermatophyta</taxon>
        <taxon>Magnoliopsida</taxon>
        <taxon>eudicotyledons</taxon>
        <taxon>Gunneridae</taxon>
        <taxon>Pentapetalae</taxon>
        <taxon>rosids</taxon>
        <taxon>malvids</taxon>
        <taxon>Brassicales</taxon>
        <taxon>Brassicaceae</taxon>
        <taxon>Camelineae</taxon>
        <taxon>Arabidopsis</taxon>
    </lineage>
</organism>
<name>SOFL3_ARATH</name>
<accession>F4J6N7</accession>
<accession>A0A178VCC2</accession>
<accession>Q9LW41</accession>
<sequence>MEREECSSSESGWTTYISSRMEEEEEEVIDEVYYEGHIIEKDRRKYANEYEINKDSDDSMASDASSGPSYHQTSNRGKRREGLALRNGKGESNDVYSHRIDDKNIGNLISRKKEKKKSENKSRSHKKK</sequence>
<evidence type="ECO:0000250" key="1">
    <source>
        <dbReference type="UniProtKB" id="Q67YG7"/>
    </source>
</evidence>
<evidence type="ECO:0000250" key="2">
    <source>
        <dbReference type="UniProtKB" id="Q9CA45"/>
    </source>
</evidence>
<evidence type="ECO:0000255" key="3">
    <source>
        <dbReference type="PROSITE-ProRule" id="PRU00768"/>
    </source>
</evidence>
<evidence type="ECO:0000256" key="4">
    <source>
        <dbReference type="SAM" id="MobiDB-lite"/>
    </source>
</evidence>
<evidence type="ECO:0000269" key="5">
    <source>
    </source>
</evidence>
<evidence type="ECO:0000303" key="6">
    <source>
    </source>
</evidence>
<evidence type="ECO:0000305" key="7"/>
<evidence type="ECO:0000305" key="8">
    <source>
    </source>
</evidence>
<evidence type="ECO:0000312" key="9">
    <source>
        <dbReference type="Araport" id="AT3G30580"/>
    </source>
</evidence>
<evidence type="ECO:0000312" key="10">
    <source>
        <dbReference type="EMBL" id="BAB01024.1"/>
    </source>
</evidence>
<keyword id="KW-0203">Cytokinin biosynthesis</keyword>
<keyword id="KW-0932">Cytokinin signaling pathway</keyword>
<keyword id="KW-0963">Cytoplasm</keyword>
<keyword id="KW-0539">Nucleus</keyword>
<keyword id="KW-1185">Reference proteome</keyword>
<comment type="function">
    <text evidence="1">Involved in cytokinin-mediated development.</text>
</comment>
<comment type="subcellular location">
    <subcellularLocation>
        <location evidence="1">Cytoplasm</location>
    </subcellularLocation>
    <subcellularLocation>
        <location evidence="1 3">Nucleus</location>
    </subcellularLocation>
</comment>
<comment type="tissue specificity">
    <text evidence="5">Expressed in seedlings, roots, flowers and siliques.</text>
</comment>
<comment type="domain">
    <text evidence="2">Domains SOFL-A and SOFL-B are required for function in cytokinin-mediated development.</text>
</comment>
<comment type="similarity">
    <text evidence="7">Belongs to the SOFL plant protein family.</text>
</comment>
<comment type="sequence caution" evidence="7">
    <conflict type="erroneous gene model prediction">
        <sequence resource="EMBL-CDS" id="BAB01024"/>
    </conflict>
</comment>
<feature type="chain" id="PRO_0000450251" description="Protein SOB FIVE-LIKE 3">
    <location>
        <begin position="1"/>
        <end position="128"/>
    </location>
</feature>
<feature type="region of interest" description="Disordered" evidence="4">
    <location>
        <begin position="1"/>
        <end position="26"/>
    </location>
</feature>
<feature type="region of interest" description="Disordered" evidence="4">
    <location>
        <begin position="54"/>
        <end position="128"/>
    </location>
</feature>
<feature type="short sequence motif" description="SOFL-A" evidence="8">
    <location>
        <begin position="11"/>
        <end position="16"/>
    </location>
</feature>
<feature type="short sequence motif" description="SOFL-B" evidence="8">
    <location>
        <begin position="59"/>
        <end position="68"/>
    </location>
</feature>
<feature type="short sequence motif" description="Nuclear localization signal" evidence="3">
    <location>
        <begin position="111"/>
        <end position="118"/>
    </location>
</feature>
<feature type="compositionally biased region" description="Polar residues" evidence="4">
    <location>
        <begin position="8"/>
        <end position="18"/>
    </location>
</feature>
<feature type="compositionally biased region" description="Basic and acidic residues" evidence="4">
    <location>
        <begin position="80"/>
        <end position="104"/>
    </location>
</feature>
<protein>
    <recommendedName>
        <fullName evidence="6">Protein SOB FIVE-LIKE 3</fullName>
        <shortName evidence="6">AtSOFL3</shortName>
    </recommendedName>
</protein>